<accession>Q8YJ23</accession>
<evidence type="ECO:0000255" key="1"/>
<evidence type="ECO:0000305" key="2"/>
<proteinExistence type="inferred from homology"/>
<gene>
    <name type="ordered locus">BMEI0263</name>
</gene>
<organism>
    <name type="scientific">Brucella melitensis biotype 1 (strain ATCC 23456 / CCUG 17765 / NCTC 10094 / 16M)</name>
    <dbReference type="NCBI Taxonomy" id="224914"/>
    <lineage>
        <taxon>Bacteria</taxon>
        <taxon>Pseudomonadati</taxon>
        <taxon>Pseudomonadota</taxon>
        <taxon>Alphaproteobacteria</taxon>
        <taxon>Hyphomicrobiales</taxon>
        <taxon>Brucellaceae</taxon>
        <taxon>Brucella/Ochrobactrum group</taxon>
        <taxon>Brucella</taxon>
    </lineage>
</organism>
<comment type="function">
    <text evidence="2">Component of an amino-acid transport system.</text>
</comment>
<comment type="similarity">
    <text evidence="2">Belongs to the leucine-binding protein family.</text>
</comment>
<comment type="sequence caution" evidence="2">
    <conflict type="erroneous initiation">
        <sequence resource="EMBL-CDS" id="AAL51445"/>
    </conflict>
</comment>
<dbReference type="EMBL" id="AE008917">
    <property type="protein sequence ID" value="AAL51445.1"/>
    <property type="status" value="ALT_INIT"/>
    <property type="molecule type" value="Genomic_DNA"/>
</dbReference>
<dbReference type="PIR" id="AB3285">
    <property type="entry name" value="AB3285"/>
</dbReference>
<dbReference type="RefSeq" id="WP_004684242.1">
    <property type="nucleotide sequence ID" value="NZ_GG703781.1"/>
</dbReference>
<dbReference type="SMR" id="Q8YJ23"/>
<dbReference type="GeneID" id="29593023"/>
<dbReference type="KEGG" id="bme:BMEI0263"/>
<dbReference type="KEGG" id="bmel:DK63_1170"/>
<dbReference type="PATRIC" id="fig|224914.52.peg.1237"/>
<dbReference type="eggNOG" id="COG0683">
    <property type="taxonomic scope" value="Bacteria"/>
</dbReference>
<dbReference type="PhylomeDB" id="Q8YJ23"/>
<dbReference type="Proteomes" id="UP000000419">
    <property type="component" value="Chromosome I"/>
</dbReference>
<dbReference type="GO" id="GO:0006865">
    <property type="term" value="P:amino acid transport"/>
    <property type="evidence" value="ECO:0007669"/>
    <property type="project" value="UniProtKB-KW"/>
</dbReference>
<dbReference type="CDD" id="cd06342">
    <property type="entry name" value="PBP1_ABC_LIVBP-like"/>
    <property type="match status" value="1"/>
</dbReference>
<dbReference type="Gene3D" id="3.40.50.2300">
    <property type="match status" value="2"/>
</dbReference>
<dbReference type="InterPro" id="IPR028081">
    <property type="entry name" value="Leu-bd"/>
</dbReference>
<dbReference type="InterPro" id="IPR000709">
    <property type="entry name" value="Leu_Ile_Val-bd"/>
</dbReference>
<dbReference type="InterPro" id="IPR028082">
    <property type="entry name" value="Peripla_BP_I"/>
</dbReference>
<dbReference type="PANTHER" id="PTHR47151:SF2">
    <property type="entry name" value="AMINO ACID BINDING PROTEIN"/>
    <property type="match status" value="1"/>
</dbReference>
<dbReference type="PANTHER" id="PTHR47151">
    <property type="entry name" value="LEU/ILE/VAL-BINDING ABC TRANSPORTER SUBUNIT"/>
    <property type="match status" value="1"/>
</dbReference>
<dbReference type="Pfam" id="PF13458">
    <property type="entry name" value="Peripla_BP_6"/>
    <property type="match status" value="1"/>
</dbReference>
<dbReference type="PRINTS" id="PR00337">
    <property type="entry name" value="LEUILEVALBP"/>
</dbReference>
<dbReference type="SUPFAM" id="SSF53822">
    <property type="entry name" value="Periplasmic binding protein-like I"/>
    <property type="match status" value="1"/>
</dbReference>
<reference key="1">
    <citation type="journal article" date="2002" name="Proc. Natl. Acad. Sci. U.S.A.">
        <title>The genome sequence of the facultative intracellular pathogen Brucella melitensis.</title>
        <authorList>
            <person name="DelVecchio V.G."/>
            <person name="Kapatral V."/>
            <person name="Redkar R.J."/>
            <person name="Patra G."/>
            <person name="Mujer C."/>
            <person name="Los T."/>
            <person name="Ivanova N."/>
            <person name="Anderson I."/>
            <person name="Bhattacharyya A."/>
            <person name="Lykidis A."/>
            <person name="Reznik G."/>
            <person name="Jablonski L."/>
            <person name="Larsen N."/>
            <person name="D'Souza M."/>
            <person name="Bernal A."/>
            <person name="Mazur M."/>
            <person name="Goltsman E."/>
            <person name="Selkov E."/>
            <person name="Elzer P.H."/>
            <person name="Hagius S."/>
            <person name="O'Callaghan D."/>
            <person name="Letesson J.-J."/>
            <person name="Haselkorn R."/>
            <person name="Kyrpides N.C."/>
            <person name="Overbeek R."/>
        </authorList>
    </citation>
    <scope>NUCLEOTIDE SEQUENCE [LARGE SCALE GENOMIC DNA]</scope>
    <source>
        <strain>ATCC 23456 / CCUG 17765 / NCTC 10094 / 16M</strain>
    </source>
</reference>
<name>LIVB1_BRUME</name>
<protein>
    <recommendedName>
        <fullName>Leu/Ile/Val-binding protein homolog 1</fullName>
    </recommendedName>
</protein>
<keyword id="KW-0029">Amino-acid transport</keyword>
<keyword id="KW-0732">Signal</keyword>
<keyword id="KW-0813">Transport</keyword>
<feature type="signal peptide" evidence="1">
    <location>
        <begin position="1"/>
        <end position="23"/>
    </location>
</feature>
<feature type="chain" id="PRO_0000282524" description="Leu/Ile/Val-binding protein homolog 1">
    <location>
        <begin position="24"/>
        <end position="371"/>
    </location>
</feature>
<sequence>MRKTLFSGVALAAVIAFGGSAWADVLVGIGIPVTGPNAVYGAQIQKGAEAAIKEVNDAGGINGEKIAITIGDDVSDPKQGISVANKFAADGVKFVIGHFNSGVTIPASQVYAENGILEISPGATNPQYTEQGLWNTFRTCGRDDQQGTVAGQYIFDHFKDAKIAVVHDKTPYGQGLADETKKKLNELGTKETLYEGVNVGEKDFSALIAKLKQAGVNVVYWGGLHPEAGLIIRQMADQGLKAQFISGDGIVSNELASIAGPAVEGTLNTFGPDPRNNPDNAELVKKFRDAGFEPEAYTLYSYAAVQSLAQAAKAAGSNDPQEVAKAMKEKGPFKTVLGDLSYDEKGDPKLPGYVMYKWEKGADGKYNYIQQ</sequence>